<evidence type="ECO:0000250" key="1"/>
<evidence type="ECO:0000255" key="2"/>
<evidence type="ECO:0000255" key="3">
    <source>
        <dbReference type="PROSITE-ProRule" id="PRU00114"/>
    </source>
</evidence>
<evidence type="ECO:0000255" key="4">
    <source>
        <dbReference type="PROSITE-ProRule" id="PRU00160"/>
    </source>
</evidence>
<evidence type="ECO:0000255" key="5">
    <source>
        <dbReference type="PROSITE-ProRule" id="PRU00316"/>
    </source>
</evidence>
<evidence type="ECO:0000255" key="6">
    <source>
        <dbReference type="PROSITE-ProRule" id="PRU10044"/>
    </source>
</evidence>
<evidence type="ECO:0000256" key="7">
    <source>
        <dbReference type="SAM" id="MobiDB-lite"/>
    </source>
</evidence>
<evidence type="ECO:0000305" key="8"/>
<reference key="1">
    <citation type="journal article" date="2013" name="Nature">
        <title>The zebrafish reference genome sequence and its relationship to the human genome.</title>
        <authorList>
            <person name="Howe K."/>
            <person name="Clark M.D."/>
            <person name="Torroja C.F."/>
            <person name="Torrance J."/>
            <person name="Berthelot C."/>
            <person name="Muffato M."/>
            <person name="Collins J.E."/>
            <person name="Humphray S."/>
            <person name="McLaren K."/>
            <person name="Matthews L."/>
            <person name="McLaren S."/>
            <person name="Sealy I."/>
            <person name="Caccamo M."/>
            <person name="Churcher C."/>
            <person name="Scott C."/>
            <person name="Barrett J.C."/>
            <person name="Koch R."/>
            <person name="Rauch G.J."/>
            <person name="White S."/>
            <person name="Chow W."/>
            <person name="Kilian B."/>
            <person name="Quintais L.T."/>
            <person name="Guerra-Assuncao J.A."/>
            <person name="Zhou Y."/>
            <person name="Gu Y."/>
            <person name="Yen J."/>
            <person name="Vogel J.H."/>
            <person name="Eyre T."/>
            <person name="Redmond S."/>
            <person name="Banerjee R."/>
            <person name="Chi J."/>
            <person name="Fu B."/>
            <person name="Langley E."/>
            <person name="Maguire S.F."/>
            <person name="Laird G.K."/>
            <person name="Lloyd D."/>
            <person name="Kenyon E."/>
            <person name="Donaldson S."/>
            <person name="Sehra H."/>
            <person name="Almeida-King J."/>
            <person name="Loveland J."/>
            <person name="Trevanion S."/>
            <person name="Jones M."/>
            <person name="Quail M."/>
            <person name="Willey D."/>
            <person name="Hunt A."/>
            <person name="Burton J."/>
            <person name="Sims S."/>
            <person name="McLay K."/>
            <person name="Plumb B."/>
            <person name="Davis J."/>
            <person name="Clee C."/>
            <person name="Oliver K."/>
            <person name="Clark R."/>
            <person name="Riddle C."/>
            <person name="Elliot D."/>
            <person name="Threadgold G."/>
            <person name="Harden G."/>
            <person name="Ware D."/>
            <person name="Begum S."/>
            <person name="Mortimore B."/>
            <person name="Kerry G."/>
            <person name="Heath P."/>
            <person name="Phillimore B."/>
            <person name="Tracey A."/>
            <person name="Corby N."/>
            <person name="Dunn M."/>
            <person name="Johnson C."/>
            <person name="Wood J."/>
            <person name="Clark S."/>
            <person name="Pelan S."/>
            <person name="Griffiths G."/>
            <person name="Smith M."/>
            <person name="Glithero R."/>
            <person name="Howden P."/>
            <person name="Barker N."/>
            <person name="Lloyd C."/>
            <person name="Stevens C."/>
            <person name="Harley J."/>
            <person name="Holt K."/>
            <person name="Panagiotidis G."/>
            <person name="Lovell J."/>
            <person name="Beasley H."/>
            <person name="Henderson C."/>
            <person name="Gordon D."/>
            <person name="Auger K."/>
            <person name="Wright D."/>
            <person name="Collins J."/>
            <person name="Raisen C."/>
            <person name="Dyer L."/>
            <person name="Leung K."/>
            <person name="Robertson L."/>
            <person name="Ambridge K."/>
            <person name="Leongamornlert D."/>
            <person name="McGuire S."/>
            <person name="Gilderthorp R."/>
            <person name="Griffiths C."/>
            <person name="Manthravadi D."/>
            <person name="Nichol S."/>
            <person name="Barker G."/>
            <person name="Whitehead S."/>
            <person name="Kay M."/>
            <person name="Brown J."/>
            <person name="Murnane C."/>
            <person name="Gray E."/>
            <person name="Humphries M."/>
            <person name="Sycamore N."/>
            <person name="Barker D."/>
            <person name="Saunders D."/>
            <person name="Wallis J."/>
            <person name="Babbage A."/>
            <person name="Hammond S."/>
            <person name="Mashreghi-Mohammadi M."/>
            <person name="Barr L."/>
            <person name="Martin S."/>
            <person name="Wray P."/>
            <person name="Ellington A."/>
            <person name="Matthews N."/>
            <person name="Ellwood M."/>
            <person name="Woodmansey R."/>
            <person name="Clark G."/>
            <person name="Cooper J."/>
            <person name="Tromans A."/>
            <person name="Grafham D."/>
            <person name="Skuce C."/>
            <person name="Pandian R."/>
            <person name="Andrews R."/>
            <person name="Harrison E."/>
            <person name="Kimberley A."/>
            <person name="Garnett J."/>
            <person name="Fosker N."/>
            <person name="Hall R."/>
            <person name="Garner P."/>
            <person name="Kelly D."/>
            <person name="Bird C."/>
            <person name="Palmer S."/>
            <person name="Gehring I."/>
            <person name="Berger A."/>
            <person name="Dooley C.M."/>
            <person name="Ersan-Urun Z."/>
            <person name="Eser C."/>
            <person name="Geiger H."/>
            <person name="Geisler M."/>
            <person name="Karotki L."/>
            <person name="Kirn A."/>
            <person name="Konantz J."/>
            <person name="Konantz M."/>
            <person name="Oberlander M."/>
            <person name="Rudolph-Geiger S."/>
            <person name="Teucke M."/>
            <person name="Lanz C."/>
            <person name="Raddatz G."/>
            <person name="Osoegawa K."/>
            <person name="Zhu B."/>
            <person name="Rapp A."/>
            <person name="Widaa S."/>
            <person name="Langford C."/>
            <person name="Yang F."/>
            <person name="Schuster S.C."/>
            <person name="Carter N.P."/>
            <person name="Harrow J."/>
            <person name="Ning Z."/>
            <person name="Herrero J."/>
            <person name="Searle S.M."/>
            <person name="Enright A."/>
            <person name="Geisler R."/>
            <person name="Plasterk R.H."/>
            <person name="Lee C."/>
            <person name="Westerfield M."/>
            <person name="de Jong P.J."/>
            <person name="Zon L.I."/>
            <person name="Postlethwait J.H."/>
            <person name="Nusslein-Volhard C."/>
            <person name="Hubbard T.J."/>
            <person name="Roest Crollius H."/>
            <person name="Rogers J."/>
            <person name="Stemple D.L."/>
        </authorList>
    </citation>
    <scope>NUCLEOTIDE SEQUENCE [LARGE SCALE GENOMIC DNA]</scope>
    <source>
        <strain>Tuebingen</strain>
    </source>
</reference>
<reference key="2">
    <citation type="submission" date="2007-03" db="EMBL/GenBank/DDBJ databases">
        <authorList>
            <consortium name="NIH - Zebrafish Gene Collection (ZGC) project"/>
        </authorList>
    </citation>
    <scope>NUCLEOTIDE SEQUENCE [LARGE SCALE MRNA]</scope>
</reference>
<organism>
    <name type="scientific">Danio rerio</name>
    <name type="common">Zebrafish</name>
    <name type="synonym">Brachydanio rerio</name>
    <dbReference type="NCBI Taxonomy" id="7955"/>
    <lineage>
        <taxon>Eukaryota</taxon>
        <taxon>Metazoa</taxon>
        <taxon>Chordata</taxon>
        <taxon>Craniata</taxon>
        <taxon>Vertebrata</taxon>
        <taxon>Euteleostomi</taxon>
        <taxon>Actinopterygii</taxon>
        <taxon>Neopterygii</taxon>
        <taxon>Teleostei</taxon>
        <taxon>Ostariophysi</taxon>
        <taxon>Cypriniformes</taxon>
        <taxon>Danionidae</taxon>
        <taxon>Danioninae</taxon>
        <taxon>Danio</taxon>
    </lineage>
</organism>
<name>PTPRF_DANRE</name>
<comment type="function">
    <text evidence="1">Possible cell adhesion receptor. It possesses an intrinsic protein tyrosine phosphatase activity (PTPase) (By similarity).</text>
</comment>
<comment type="function">
    <text evidence="1">The first PTPase domain has enzymatic activity, while the second one seems to affect the substrate specificity of the first one.</text>
</comment>
<comment type="catalytic activity">
    <reaction evidence="6">
        <text>O-phospho-L-tyrosyl-[protein] + H2O = L-tyrosyl-[protein] + phosphate</text>
        <dbReference type="Rhea" id="RHEA:10684"/>
        <dbReference type="Rhea" id="RHEA-COMP:10136"/>
        <dbReference type="Rhea" id="RHEA-COMP:20101"/>
        <dbReference type="ChEBI" id="CHEBI:15377"/>
        <dbReference type="ChEBI" id="CHEBI:43474"/>
        <dbReference type="ChEBI" id="CHEBI:46858"/>
        <dbReference type="ChEBI" id="CHEBI:61978"/>
        <dbReference type="EC" id="3.1.3.48"/>
    </reaction>
</comment>
<comment type="subcellular location">
    <subcellularLocation>
        <location evidence="8">Membrane</location>
        <topology evidence="8">Single-pass membrane protein</topology>
    </subcellularLocation>
</comment>
<comment type="similarity">
    <text evidence="8">Belongs to the protein-tyrosine phosphatase family. Receptor class 2A subfamily.</text>
</comment>
<sequence length="1909" mass="213454">MVPNTCTSVPLLPVGLPLLLLLSCIQFSSQADSLPNFVRSPEDQTGISGGVASFVCQAAGEPKPRITWMKKGKKVSSQRFEVIEFDDGSGSVLRIQPLRTHRDEAIYECTATNSLGEINTSAKLTVLEENQIPHGFPTIDMGPQLKVVERTRTTTMLCAASGNPDPEITWFKDFLPVDINGNGRIKQLRSGALQIENSEESDQGKYECVATNSAGTRYSAPANLYVRVRRVPPRFSIPPTNHEVMPGGSVNLTCVAVGAPMPYVKWMTGEVELTKDEEMPVGRNVLELTNIRQSTNYTCVAISSLGMIEATAQVSVKALPKPPTSLTVTETTATSVTLTWDSGNPEPVSYYIIQYRAKTSDTNFQEVDGVATTRYSIGGLSPYSEYEFRVMAVNNIGRGPPSEPVETRTGEQAPSSPPLHVQARMLSASTMLVQWEPPEEPNGQIRGYRIYYTSDLDAPLSAWQKHNTDDSRLTTISSLTTGITYSLRVLGFTSVGDGPPSDVLQVKTQQGVPAQPSSFEAEAELDTRILLTWLWPVQDPIIKYELQYWEADSDNKIHVTFDPAGSYAVEGLKPDTLYKFSLAARSEMGQGVFTHPIEARTAQSAPSAPPQDVHLLSLSSTSIKVSWVAPPAASRHGAIVRYTVSYQAVNGEDTERHEVPDIGADASSCVLEGLEKWTEYQVWVRAHTDVGPGPESTAVRIRTNEDVPGAPPRKLEVEALNSTAIRVTWKPPLSGKQHGQIRGYQVIYSRLENGEPRGHPNIMDVALPEAQWKIEESTEYEAVIAGLASETSYSVTVAAYTTKGDGARSKAKVVTTTGAVPGKPTMIISTTVGNTALIQWQPPKDMVGELMGYRLRYKRLEEENYEIREFSRTDDHHTVTDLHKGATYSFHLSARNRAGLGEEYVKDIGTPEDVPSGFPLNLQVVGLTTSTTRLTWEPPALSERNGRIIHYIVVYRDINSKQNSTNRTSDTQMTIQGLRPDTTYDIRVQAFTSKGGGPISPSIQSRTMSTSPAFATSFGVKAVMKTSVLLTWEVPENYKSQVPFKILYNQQSVEVQGNLKRKLITRLQPDTDYSFVLMSRGNSAGGLQQQVSIRTAPDLFKTKPVLYTADQTNNGKLTINLPKVPTSAPVRCYYIVVVPVSQTSSRQWINPDEMELDELLESSEGAHLRRRRRHTDTVRPYIAAKLSTLPETFTLGDELDYSGFINRPLPNNQHFQCFVMAELKDQYPVTANEKQRTFSASPYSDPIIVQGENQMQRSVDQPEMLWVMGPVLAVVLIIIIVIAILLFKRKRASPLPKDDHSGGVKDCLLASSSDPVEMRRLNYQTPGMREHPPISVSELADHIERLKANDALRFSQEYESIDPGQQFTWENSNLEVNKPKNRYANVIAYDHSRVVLTPVDGVPGSDYINSNYIDGYRKQNAYIATQGPLPETLSDFWRMIWEQRASTIVMMTRLEEKSRVKCDQYWPIRGTETYGMIQVTMLDAVELATYSVRTFALYKNGSSEKREVRQFQFMAWPDHGVPEYPTPILAFLRRVKACNPPDAGPMVVHCSAGVGRTGCFIVIDAMLERMKHEKTVDIYGHVTCMRSQRNYMVQTEDQYIFIHEALLEAATCGNTEVPARNLYAHIQKLTQPSAGETVTAMELEFKRLANSKAHTSRFISANLPCNKFKNRLVNIMPFESTRVCLQPIRGVEGSDYINASCIDGYRQQKAYIATQGPLAETTEDFWRMLWEHNSTIVVMLTKLREMGREKCHQYWPAERSARYQYFVVDPMAEYNMPQYILREFKVTDARDGQSRTIRQFQFTDWPEQGVPKTGEGFIDFIGQVHKTKEQFGQDGPITVHCSAGVGRTGVFITLSIVLERMRYEGVVDLFQTVKTLRTQRPAMVQTEDQYQLCYRAALEYLGSFDHYAT</sequence>
<dbReference type="EC" id="3.1.3.48"/>
<dbReference type="EMBL" id="BX663493">
    <property type="protein sequence ID" value="CAN88403.1"/>
    <property type="molecule type" value="Genomic_DNA"/>
</dbReference>
<dbReference type="EMBL" id="BX248089">
    <property type="protein sequence ID" value="CAN88403.1"/>
    <property type="status" value="JOINED"/>
    <property type="molecule type" value="Genomic_DNA"/>
</dbReference>
<dbReference type="EMBL" id="BX248089">
    <property type="protein sequence ID" value="CAQ13596.1"/>
    <property type="molecule type" value="Genomic_DNA"/>
</dbReference>
<dbReference type="EMBL" id="BX663493">
    <property type="protein sequence ID" value="CAQ13596.1"/>
    <property type="status" value="JOINED"/>
    <property type="molecule type" value="Genomic_DNA"/>
</dbReference>
<dbReference type="EMBL" id="BC134804">
    <property type="protein sequence ID" value="AAI34805.1"/>
    <property type="molecule type" value="mRNA"/>
</dbReference>
<dbReference type="RefSeq" id="NP_001077045.1">
    <property type="nucleotide sequence ID" value="NM_001083576.1"/>
</dbReference>
<dbReference type="SMR" id="A4IFW2"/>
<dbReference type="FunCoup" id="A4IFW2">
    <property type="interactions" value="1282"/>
</dbReference>
<dbReference type="STRING" id="7955.ENSDARP00000077749"/>
<dbReference type="GlyCosmos" id="A4IFW2">
    <property type="glycosylation" value="6 sites, No reported glycans"/>
</dbReference>
<dbReference type="PaxDb" id="7955-ENSDARP00000077749"/>
<dbReference type="PeptideAtlas" id="A4IFW2"/>
<dbReference type="Ensembl" id="ENSDART00000083314">
    <property type="protein sequence ID" value="ENSDARP00000077749"/>
    <property type="gene ID" value="ENSDARG00000005754"/>
</dbReference>
<dbReference type="GeneID" id="799867"/>
<dbReference type="KEGG" id="dre:799867"/>
<dbReference type="AGR" id="ZFIN:ZDB-GENE-060503-530"/>
<dbReference type="CTD" id="799867"/>
<dbReference type="ZFIN" id="ZDB-GENE-060503-530">
    <property type="gene designation" value="ptprfb"/>
</dbReference>
<dbReference type="eggNOG" id="KOG4228">
    <property type="taxonomic scope" value="Eukaryota"/>
</dbReference>
<dbReference type="HOGENOM" id="CLU_001645_4_0_1"/>
<dbReference type="InParanoid" id="A4IFW2"/>
<dbReference type="OrthoDB" id="10253954at2759"/>
<dbReference type="PhylomeDB" id="A4IFW2"/>
<dbReference type="TreeFam" id="TF312900"/>
<dbReference type="Reactome" id="R-DRE-388844">
    <property type="pathway name" value="Receptor-type tyrosine-protein phosphatases"/>
</dbReference>
<dbReference type="PRO" id="PR:A4IFW2"/>
<dbReference type="Proteomes" id="UP000000437">
    <property type="component" value="Chromosome 2"/>
</dbReference>
<dbReference type="Bgee" id="ENSDARG00000005754">
    <property type="expression patterns" value="Expressed in pharyngeal gill and 31 other cell types or tissues"/>
</dbReference>
<dbReference type="ExpressionAtlas" id="A4IFW2">
    <property type="expression patterns" value="baseline and differential"/>
</dbReference>
<dbReference type="GO" id="GO:0016020">
    <property type="term" value="C:membrane"/>
    <property type="evidence" value="ECO:0007669"/>
    <property type="project" value="UniProtKB-SubCell"/>
</dbReference>
<dbReference type="GO" id="GO:0008201">
    <property type="term" value="F:heparin binding"/>
    <property type="evidence" value="ECO:0007669"/>
    <property type="project" value="UniProtKB-KW"/>
</dbReference>
<dbReference type="GO" id="GO:0004725">
    <property type="term" value="F:protein tyrosine phosphatase activity"/>
    <property type="evidence" value="ECO:0000318"/>
    <property type="project" value="GO_Central"/>
</dbReference>
<dbReference type="GO" id="GO:0097374">
    <property type="term" value="P:sensory neuron axon guidance"/>
    <property type="evidence" value="ECO:0000315"/>
    <property type="project" value="ZFIN"/>
</dbReference>
<dbReference type="GO" id="GO:0007165">
    <property type="term" value="P:signal transduction"/>
    <property type="evidence" value="ECO:0000318"/>
    <property type="project" value="GO_Central"/>
</dbReference>
<dbReference type="GO" id="GO:0099560">
    <property type="term" value="P:synaptic membrane adhesion"/>
    <property type="evidence" value="ECO:0000318"/>
    <property type="project" value="GO_Central"/>
</dbReference>
<dbReference type="CDD" id="cd00063">
    <property type="entry name" value="FN3"/>
    <property type="match status" value="8"/>
</dbReference>
<dbReference type="CDD" id="cd05738">
    <property type="entry name" value="IgI_2_RPTP_IIa_LAR_like"/>
    <property type="match status" value="1"/>
</dbReference>
<dbReference type="CDD" id="cd05739">
    <property type="entry name" value="IgI_3_RPTP_IIa_LAR_like"/>
    <property type="match status" value="1"/>
</dbReference>
<dbReference type="CDD" id="cd14626">
    <property type="entry name" value="R-PTPc-F-1"/>
    <property type="match status" value="1"/>
</dbReference>
<dbReference type="FunFam" id="2.60.40.10:FF:000010">
    <property type="entry name" value="receptor-type tyrosine-protein phosphatase delta isoform X1"/>
    <property type="match status" value="1"/>
</dbReference>
<dbReference type="FunFam" id="2.60.40.10:FF:000027">
    <property type="entry name" value="receptor-type tyrosine-protein phosphatase delta isoform X1"/>
    <property type="match status" value="1"/>
</dbReference>
<dbReference type="FunFam" id="2.60.40.10:FF:000036">
    <property type="entry name" value="receptor-type tyrosine-protein phosphatase delta isoform X1"/>
    <property type="match status" value="1"/>
</dbReference>
<dbReference type="FunFam" id="2.60.40.10:FF:000066">
    <property type="entry name" value="receptor-type tyrosine-protein phosphatase delta isoform X1"/>
    <property type="match status" value="1"/>
</dbReference>
<dbReference type="FunFam" id="2.60.40.10:FF:000144">
    <property type="entry name" value="receptor-type tyrosine-protein phosphatase delta isoform X1"/>
    <property type="match status" value="1"/>
</dbReference>
<dbReference type="FunFam" id="2.60.40.10:FF:000015">
    <property type="entry name" value="receptor-type tyrosine-protein phosphatase delta isoform X2"/>
    <property type="match status" value="1"/>
</dbReference>
<dbReference type="FunFam" id="2.60.40.10:FF:000023">
    <property type="entry name" value="receptor-type tyrosine-protein phosphatase delta isoform X2"/>
    <property type="match status" value="1"/>
</dbReference>
<dbReference type="FunFam" id="2.60.40.10:FF:000082">
    <property type="entry name" value="receptor-type tyrosine-protein phosphatase delta isoform X2"/>
    <property type="match status" value="1"/>
</dbReference>
<dbReference type="FunFam" id="2.60.40.10:FF:000128">
    <property type="entry name" value="receptor-type tyrosine-protein phosphatase delta isoform X2"/>
    <property type="match status" value="1"/>
</dbReference>
<dbReference type="FunFam" id="3.90.190.10:FF:000002">
    <property type="entry name" value="receptor-type tyrosine-protein phosphatase delta isoform X2"/>
    <property type="match status" value="1"/>
</dbReference>
<dbReference type="FunFam" id="3.90.190.10:FF:000001">
    <property type="entry name" value="Receptor-type tyrosine-protein phosphatase F isoform A"/>
    <property type="match status" value="1"/>
</dbReference>
<dbReference type="FunFam" id="2.60.40.10:FF:000098">
    <property type="entry name" value="receptor-type tyrosine-protein phosphatase F isoform X1"/>
    <property type="match status" value="1"/>
</dbReference>
<dbReference type="FunFam" id="2.60.40.10:FF:000353">
    <property type="entry name" value="receptor-type tyrosine-protein phosphatase F isoform X1"/>
    <property type="match status" value="1"/>
</dbReference>
<dbReference type="Gene3D" id="2.60.40.10">
    <property type="entry name" value="Immunoglobulins"/>
    <property type="match status" value="11"/>
</dbReference>
<dbReference type="Gene3D" id="3.90.190.10">
    <property type="entry name" value="Protein tyrosine phosphatase superfamily"/>
    <property type="match status" value="2"/>
</dbReference>
<dbReference type="InterPro" id="IPR003961">
    <property type="entry name" value="FN3_dom"/>
</dbReference>
<dbReference type="InterPro" id="IPR036116">
    <property type="entry name" value="FN3_sf"/>
</dbReference>
<dbReference type="InterPro" id="IPR007110">
    <property type="entry name" value="Ig-like_dom"/>
</dbReference>
<dbReference type="InterPro" id="IPR036179">
    <property type="entry name" value="Ig-like_dom_sf"/>
</dbReference>
<dbReference type="InterPro" id="IPR013783">
    <property type="entry name" value="Ig-like_fold"/>
</dbReference>
<dbReference type="InterPro" id="IPR013098">
    <property type="entry name" value="Ig_I-set"/>
</dbReference>
<dbReference type="InterPro" id="IPR003599">
    <property type="entry name" value="Ig_sub"/>
</dbReference>
<dbReference type="InterPro" id="IPR003598">
    <property type="entry name" value="Ig_sub2"/>
</dbReference>
<dbReference type="InterPro" id="IPR029021">
    <property type="entry name" value="Prot-tyrosine_phosphatase-like"/>
</dbReference>
<dbReference type="InterPro" id="IPR000242">
    <property type="entry name" value="PTP_cat"/>
</dbReference>
<dbReference type="InterPro" id="IPR050713">
    <property type="entry name" value="RTP_Phos/Ushers"/>
</dbReference>
<dbReference type="InterPro" id="IPR016130">
    <property type="entry name" value="Tyr_Pase_AS"/>
</dbReference>
<dbReference type="InterPro" id="IPR003595">
    <property type="entry name" value="Tyr_Pase_cat"/>
</dbReference>
<dbReference type="InterPro" id="IPR000387">
    <property type="entry name" value="Tyr_Pase_dom"/>
</dbReference>
<dbReference type="PANTHER" id="PTHR46957">
    <property type="entry name" value="CYTOKINE RECEPTOR"/>
    <property type="match status" value="1"/>
</dbReference>
<dbReference type="PANTHER" id="PTHR46957:SF9">
    <property type="entry name" value="PROTEIN-TYROSINE-PHOSPHATASE"/>
    <property type="match status" value="1"/>
</dbReference>
<dbReference type="Pfam" id="PF00041">
    <property type="entry name" value="fn3"/>
    <property type="match status" value="7"/>
</dbReference>
<dbReference type="Pfam" id="PF07679">
    <property type="entry name" value="I-set"/>
    <property type="match status" value="2"/>
</dbReference>
<dbReference type="Pfam" id="PF13927">
    <property type="entry name" value="Ig_3"/>
    <property type="match status" value="1"/>
</dbReference>
<dbReference type="Pfam" id="PF00102">
    <property type="entry name" value="Y_phosphatase"/>
    <property type="match status" value="2"/>
</dbReference>
<dbReference type="PRINTS" id="PR00014">
    <property type="entry name" value="FNTYPEIII"/>
</dbReference>
<dbReference type="PRINTS" id="PR00700">
    <property type="entry name" value="PRTYPHPHTASE"/>
</dbReference>
<dbReference type="SMART" id="SM00060">
    <property type="entry name" value="FN3"/>
    <property type="match status" value="8"/>
</dbReference>
<dbReference type="SMART" id="SM00409">
    <property type="entry name" value="IG"/>
    <property type="match status" value="3"/>
</dbReference>
<dbReference type="SMART" id="SM00408">
    <property type="entry name" value="IGc2"/>
    <property type="match status" value="3"/>
</dbReference>
<dbReference type="SMART" id="SM00194">
    <property type="entry name" value="PTPc"/>
    <property type="match status" value="2"/>
</dbReference>
<dbReference type="SMART" id="SM00404">
    <property type="entry name" value="PTPc_motif"/>
    <property type="match status" value="2"/>
</dbReference>
<dbReference type="SUPFAM" id="SSF52799">
    <property type="entry name" value="(Phosphotyrosine protein) phosphatases II"/>
    <property type="match status" value="2"/>
</dbReference>
<dbReference type="SUPFAM" id="SSF49265">
    <property type="entry name" value="Fibronectin type III"/>
    <property type="match status" value="5"/>
</dbReference>
<dbReference type="SUPFAM" id="SSF48726">
    <property type="entry name" value="Immunoglobulin"/>
    <property type="match status" value="3"/>
</dbReference>
<dbReference type="PROSITE" id="PS50853">
    <property type="entry name" value="FN3"/>
    <property type="match status" value="8"/>
</dbReference>
<dbReference type="PROSITE" id="PS50835">
    <property type="entry name" value="IG_LIKE"/>
    <property type="match status" value="3"/>
</dbReference>
<dbReference type="PROSITE" id="PS00383">
    <property type="entry name" value="TYR_PHOSPHATASE_1"/>
    <property type="match status" value="2"/>
</dbReference>
<dbReference type="PROSITE" id="PS50056">
    <property type="entry name" value="TYR_PHOSPHATASE_2"/>
    <property type="match status" value="2"/>
</dbReference>
<dbReference type="PROSITE" id="PS50055">
    <property type="entry name" value="TYR_PHOSPHATASE_PTP"/>
    <property type="match status" value="2"/>
</dbReference>
<proteinExistence type="evidence at transcript level"/>
<feature type="signal peptide" evidence="2">
    <location>
        <begin position="1"/>
        <end position="31"/>
    </location>
</feature>
<feature type="chain" id="PRO_0000370194" description="Receptor-type tyrosine-protein phosphatase F">
    <location>
        <begin position="32"/>
        <end position="1909"/>
    </location>
</feature>
<feature type="topological domain" description="Extracellular" evidence="2">
    <location>
        <begin position="32"/>
        <end position="1266"/>
    </location>
</feature>
<feature type="transmembrane region" description="Helical" evidence="2">
    <location>
        <begin position="1267"/>
        <end position="1287"/>
    </location>
</feature>
<feature type="topological domain" description="Cytoplasmic" evidence="2">
    <location>
        <begin position="1288"/>
        <end position="1909"/>
    </location>
</feature>
<feature type="domain" description="Ig-like C2-type 1">
    <location>
        <begin position="35"/>
        <end position="125"/>
    </location>
</feature>
<feature type="domain" description="Ig-like C2-type 2">
    <location>
        <begin position="137"/>
        <end position="225"/>
    </location>
</feature>
<feature type="domain" description="Ig-like C2-type 3">
    <location>
        <begin position="233"/>
        <end position="315"/>
    </location>
</feature>
<feature type="domain" description="Fibronectin type-III 1" evidence="5">
    <location>
        <begin position="322"/>
        <end position="412"/>
    </location>
</feature>
<feature type="domain" description="Fibronectin type-III 2" evidence="5">
    <location>
        <begin position="417"/>
        <end position="511"/>
    </location>
</feature>
<feature type="domain" description="Fibronectin type-III 3" evidence="5">
    <location>
        <begin position="515"/>
        <end position="604"/>
    </location>
</feature>
<feature type="domain" description="Fibronectin type-III 4" evidence="5">
    <location>
        <begin position="609"/>
        <end position="706"/>
    </location>
</feature>
<feature type="domain" description="Fibronectin type-III 5" evidence="5">
    <location>
        <begin position="711"/>
        <end position="819"/>
    </location>
</feature>
<feature type="domain" description="Fibronectin type-III 6" evidence="5">
    <location>
        <begin position="820"/>
        <end position="914"/>
    </location>
</feature>
<feature type="domain" description="Fibronectin type-III 7" evidence="5">
    <location>
        <begin position="918"/>
        <end position="1013"/>
    </location>
</feature>
<feature type="domain" description="Fibronectin type-III 8" evidence="5">
    <location>
        <begin position="1014"/>
        <end position="1098"/>
    </location>
</feature>
<feature type="domain" description="Tyrosine-protein phosphatase 1" evidence="4">
    <location>
        <begin position="1354"/>
        <end position="1609"/>
    </location>
</feature>
<feature type="domain" description="Tyrosine-protein phosphatase 2" evidence="4">
    <location>
        <begin position="1641"/>
        <end position="1900"/>
    </location>
</feature>
<feature type="region of interest" description="Disordered" evidence="7">
    <location>
        <begin position="399"/>
        <end position="418"/>
    </location>
</feature>
<feature type="active site" description="Phosphocysteine intermediate" evidence="1">
    <location>
        <position position="1550"/>
    </location>
</feature>
<feature type="active site" description="Phosphocysteine intermediate" evidence="1">
    <location>
        <position position="1841"/>
    </location>
</feature>
<feature type="binding site" evidence="1">
    <location>
        <begin position="68"/>
        <end position="77"/>
    </location>
    <ligand>
        <name>heparin</name>
        <dbReference type="ChEBI" id="CHEBI:28304"/>
    </ligand>
</feature>
<feature type="binding site" evidence="1">
    <location>
        <position position="1518"/>
    </location>
    <ligand>
        <name>substrate</name>
    </ligand>
</feature>
<feature type="binding site" evidence="1">
    <location>
        <begin position="1550"/>
        <end position="1556"/>
    </location>
    <ligand>
        <name>substrate</name>
    </ligand>
</feature>
<feature type="binding site" evidence="1">
    <location>
        <position position="1594"/>
    </location>
    <ligand>
        <name>substrate</name>
    </ligand>
</feature>
<feature type="glycosylation site" description="N-linked (GlcNAc...) asparagine" evidence="2">
    <location>
        <position position="119"/>
    </location>
</feature>
<feature type="glycosylation site" description="N-linked (GlcNAc...) asparagine" evidence="2">
    <location>
        <position position="251"/>
    </location>
</feature>
<feature type="glycosylation site" description="N-linked (GlcNAc...) asparagine" evidence="2">
    <location>
        <position position="296"/>
    </location>
</feature>
<feature type="glycosylation site" description="N-linked (GlcNAc...) asparagine" evidence="2">
    <location>
        <position position="721"/>
    </location>
</feature>
<feature type="glycosylation site" description="N-linked (GlcNAc...) asparagine" evidence="2">
    <location>
        <position position="963"/>
    </location>
</feature>
<feature type="glycosylation site" description="N-linked (GlcNAc...) asparagine" evidence="2">
    <location>
        <position position="966"/>
    </location>
</feature>
<feature type="disulfide bond" evidence="3">
    <location>
        <begin position="56"/>
        <end position="109"/>
    </location>
</feature>
<feature type="disulfide bond" evidence="3">
    <location>
        <begin position="158"/>
        <end position="208"/>
    </location>
</feature>
<feature type="disulfide bond" evidence="3">
    <location>
        <begin position="254"/>
        <end position="299"/>
    </location>
</feature>
<accession>A4IFW2</accession>
<protein>
    <recommendedName>
        <fullName>Receptor-type tyrosine-protein phosphatase F</fullName>
        <ecNumber>3.1.3.48</ecNumber>
    </recommendedName>
</protein>
<gene>
    <name type="primary">ptprf</name>
    <name type="ORF">si:dkey-21k10.1</name>
</gene>
<keyword id="KW-0130">Cell adhesion</keyword>
<keyword id="KW-1015">Disulfide bond</keyword>
<keyword id="KW-0325">Glycoprotein</keyword>
<keyword id="KW-0358">Heparin-binding</keyword>
<keyword id="KW-0378">Hydrolase</keyword>
<keyword id="KW-0393">Immunoglobulin domain</keyword>
<keyword id="KW-0472">Membrane</keyword>
<keyword id="KW-0904">Protein phosphatase</keyword>
<keyword id="KW-0675">Receptor</keyword>
<keyword id="KW-1185">Reference proteome</keyword>
<keyword id="KW-0677">Repeat</keyword>
<keyword id="KW-0732">Signal</keyword>
<keyword id="KW-0812">Transmembrane</keyword>
<keyword id="KW-1133">Transmembrane helix</keyword>